<dbReference type="EMBL" id="X13685">
    <property type="protein sequence ID" value="CAA31978.1"/>
    <property type="molecule type" value="mRNA"/>
</dbReference>
<dbReference type="EMBL" id="M23574">
    <property type="protein sequence ID" value="AAA49421.1"/>
    <property type="molecule type" value="mRNA"/>
</dbReference>
<dbReference type="EMBL" id="M27871">
    <property type="protein sequence ID" value="AAA49419.1"/>
    <property type="molecule type" value="Genomic_DNA"/>
</dbReference>
<dbReference type="PIR" id="JS0283">
    <property type="entry name" value="MTON2K"/>
</dbReference>
<dbReference type="GO" id="GO:0045202">
    <property type="term" value="C:synapse"/>
    <property type="evidence" value="ECO:0007669"/>
    <property type="project" value="GOC"/>
</dbReference>
<dbReference type="GO" id="GO:0030354">
    <property type="term" value="F:melanin-concentrating hormone activity"/>
    <property type="evidence" value="ECO:0007669"/>
    <property type="project" value="InterPro"/>
</dbReference>
<dbReference type="GO" id="GO:0031777">
    <property type="term" value="F:type 1 melanin-concentrating hormone receptor binding"/>
    <property type="evidence" value="ECO:0007669"/>
    <property type="project" value="TreeGrafter"/>
</dbReference>
<dbReference type="GO" id="GO:0007268">
    <property type="term" value="P:chemical synaptic transmission"/>
    <property type="evidence" value="ECO:0007669"/>
    <property type="project" value="InterPro"/>
</dbReference>
<dbReference type="GO" id="GO:0007218">
    <property type="term" value="P:neuropeptide signaling pathway"/>
    <property type="evidence" value="ECO:0007669"/>
    <property type="project" value="UniProtKB-KW"/>
</dbReference>
<dbReference type="InterPro" id="IPR005456">
    <property type="entry name" value="Prepro-melanin_conc_hormone"/>
</dbReference>
<dbReference type="PANTHER" id="PTHR12091">
    <property type="entry name" value="MELANIN-CONCENTRATING HORMONE"/>
    <property type="match status" value="1"/>
</dbReference>
<dbReference type="PANTHER" id="PTHR12091:SF0">
    <property type="entry name" value="PRO-MCH"/>
    <property type="match status" value="1"/>
</dbReference>
<dbReference type="Pfam" id="PF05824">
    <property type="entry name" value="Pro-MCH"/>
    <property type="match status" value="1"/>
</dbReference>
<dbReference type="PRINTS" id="PR01641">
    <property type="entry name" value="PROMCHFAMILY"/>
</dbReference>
<keyword id="KW-0165">Cleavage on pair of basic residues</keyword>
<keyword id="KW-0903">Direct protein sequencing</keyword>
<keyword id="KW-1015">Disulfide bond</keyword>
<keyword id="KW-0372">Hormone</keyword>
<keyword id="KW-0527">Neuropeptide</keyword>
<keyword id="KW-0732">Signal</keyword>
<proteinExistence type="evidence at protein level"/>
<reference key="1">
    <citation type="journal article" date="1989" name="Nucleic Acids Res.">
        <title>cDNA sequence of salmon melanin-concentrating hormone exhibits similarities with 7SL RNA.</title>
        <authorList>
            <person name="Nahon J.-L."/>
            <person name="Schoepfer R."/>
            <person name="Vale W."/>
        </authorList>
    </citation>
    <scope>NUCLEOTIDE SEQUENCE [MRNA]</scope>
    <source>
        <tissue>Brain</tissue>
    </source>
</reference>
<reference key="2">
    <citation type="journal article" date="1989" name="Gene">
        <title>Structures of two genes coding for melanin-concentrating hormone of chum salmon.</title>
        <authorList>
            <person name="Takayama Y."/>
            <person name="Wada C."/>
            <person name="Kawauchi H."/>
            <person name="Ono M."/>
        </authorList>
    </citation>
    <scope>NUCLEOTIDE SEQUENCE [GENOMIC DNA]</scope>
</reference>
<reference key="3">
    <citation type="journal article" date="1988" name="Gene">
        <title>Structures of two kinds of mRNA encoding the chum salmon melanin-concentrating hormone.</title>
        <authorList>
            <person name="Ono M."/>
            <person name="Wada C."/>
            <person name="Oikawa I."/>
            <person name="Kawazoe I."/>
            <person name="Kawauchi H."/>
        </authorList>
    </citation>
    <scope>NUCLEOTIDE SEQUENCE [MRNA]</scope>
</reference>
<reference key="4">
    <citation type="journal article" date="1983" name="Nature">
        <title>Characterization of melanin-concentrating hormone in chum salmon pituitaries.</title>
        <authorList>
            <person name="Kawauchi H."/>
            <person name="Kawazoe I."/>
            <person name="Tsubokawa M."/>
            <person name="Kishida M."/>
            <person name="Baker B.I."/>
        </authorList>
    </citation>
    <scope>PROTEIN SEQUENCE OF 116-132</scope>
</reference>
<gene>
    <name type="primary">mch2</name>
</gene>
<organism>
    <name type="scientific">Oncorhynchus keta</name>
    <name type="common">Chum salmon</name>
    <name type="synonym">Salmo keta</name>
    <dbReference type="NCBI Taxonomy" id="8018"/>
    <lineage>
        <taxon>Eukaryota</taxon>
        <taxon>Metazoa</taxon>
        <taxon>Chordata</taxon>
        <taxon>Craniata</taxon>
        <taxon>Vertebrata</taxon>
        <taxon>Euteleostomi</taxon>
        <taxon>Actinopterygii</taxon>
        <taxon>Neopterygii</taxon>
        <taxon>Teleostei</taxon>
        <taxon>Protacanthopterygii</taxon>
        <taxon>Salmoniformes</taxon>
        <taxon>Salmonidae</taxon>
        <taxon>Salmoninae</taxon>
        <taxon>Oncorhynchus</taxon>
    </lineage>
</organism>
<feature type="signal peptide" evidence="1">
    <location>
        <begin position="1"/>
        <end position="24"/>
    </location>
</feature>
<feature type="chain" id="PRO_0000019132" description="Pro-MCH 2">
    <location>
        <begin position="25"/>
        <end position="132"/>
    </location>
</feature>
<feature type="peptide" id="PRO_0000019133" description="Neuropeptide-glutamic acid-valine" evidence="1">
    <location>
        <begin position="101"/>
        <end position="113"/>
    </location>
</feature>
<feature type="peptide" id="PRO_0000019134" description="Melanin-concentrating hormone">
    <location>
        <begin position="116"/>
        <end position="132"/>
    </location>
</feature>
<feature type="disulfide bond">
    <location>
        <begin position="120"/>
        <end position="129"/>
    </location>
</feature>
<feature type="sequence conflict" description="In Ref. 2; AAA49419." evidence="2" ref="2">
    <original>SP</original>
    <variation>NS</variation>
    <location>
        <begin position="107"/>
        <end position="108"/>
    </location>
</feature>
<feature type="sequence conflict" description="In Ref. 3; AAA49421." evidence="2" ref="3">
    <original>S</original>
    <variation>N</variation>
    <location>
        <position position="107"/>
    </location>
</feature>
<comment type="function">
    <text>Plays a role in skin pigmentation by antagonizing the action of melanotropin alpha. Induces melanin concentration within the melanophores. May participate in the control of the hypothalamo-pituitary adrenal gland axis by inhibiting the release of ACTH.</text>
</comment>
<comment type="tissue specificity">
    <text>Pituitary gland. Produced in neurons of lateral basal hypothalamus which project both to the brain and to the neural lobe of the pituitary gland from where MCH is released.</text>
</comment>
<comment type="similarity">
    <text evidence="2">Belongs to the melanin-concentrating hormone family.</text>
</comment>
<protein>
    <recommendedName>
        <fullName>Pro-MCH 2</fullName>
    </recommendedName>
    <component>
        <recommendedName>
            <fullName>Neuropeptide-glutamic acid-valine</fullName>
        </recommendedName>
        <alternativeName>
            <fullName>Neuropeptide E-V</fullName>
            <shortName>NEV</shortName>
        </alternativeName>
    </component>
    <component>
        <recommendedName>
            <fullName>Melanin-concentrating hormone</fullName>
            <shortName>MCH</shortName>
        </recommendedName>
    </component>
</protein>
<evidence type="ECO:0000255" key="1"/>
<evidence type="ECO:0000305" key="2"/>
<sequence>MRDSVLSVIFALALFLECYTPSMAIPMGKMEDTALEQDTLDSLLNEEVADKNPDSVRSGSSKIIVLADSGMWKNLNRGLPLYKLKAAAAGLDRALTLDRREADQDLSPSISIVRRDTMRCMVGRVYRPCWEV</sequence>
<name>MCH2_ONCKE</name>
<accession>P69155</accession>
<accession>P01208</accession>
<accession>P19714</accession>